<name>PURP_IGNH4</name>
<accession>A8A9M3</accession>
<evidence type="ECO:0000250" key="1"/>
<evidence type="ECO:0000255" key="2">
    <source>
        <dbReference type="HAMAP-Rule" id="MF_01163"/>
    </source>
</evidence>
<sequence>MRVTDVLKEYDLSKLTVATVASHSALQIVHGAKKEGLRTLLIVKKDRYEFYSSFSHLVDSFIIVESWKEVLNEDVVNELLASNAVLVPHGSFVEYVGAQGLLDYPVPIFGSRKILLWESDQKKKMELLRRAGIKVPREYRSPDEVDGLVIVKLGGAKGGKGYFLAKTPEEVRRGLEALGNPSNYIIQEYVIGVPAYYHFFYSPIYNRLEITGMDIRYESNVDGLRRLPPELASGIRPSFTVVGNIPVVLRESLLIDVYKYGKSFVRTTEELLGEELVGPFCLESIITEEGEVVVFEFSGRIVAGTNLYVNGSPYSYLYWDEPMSAGRRVAREIRKARDSGRLEEVLR</sequence>
<keyword id="KW-0067">ATP-binding</keyword>
<keyword id="KW-0436">Ligase</keyword>
<keyword id="KW-0460">Magnesium</keyword>
<keyword id="KW-0464">Manganese</keyword>
<keyword id="KW-0479">Metal-binding</keyword>
<keyword id="KW-0547">Nucleotide-binding</keyword>
<keyword id="KW-0658">Purine biosynthesis</keyword>
<keyword id="KW-1185">Reference proteome</keyword>
<protein>
    <recommendedName>
        <fullName evidence="2">5-formaminoimidazole-4-carboxamide-1-(beta)-D-ribofuranosyl 5'-monophosphate synthetase</fullName>
        <ecNumber evidence="2">6.3.4.23</ecNumber>
    </recommendedName>
    <alternativeName>
        <fullName evidence="2">5-aminoimidazole-4-carboxamide-1-beta-D-ribofuranosyl 5'-monophosphate--formate ligase</fullName>
    </alternativeName>
</protein>
<organism>
    <name type="scientific">Ignicoccus hospitalis (strain KIN4/I / DSM 18386 / JCM 14125)</name>
    <dbReference type="NCBI Taxonomy" id="453591"/>
    <lineage>
        <taxon>Archaea</taxon>
        <taxon>Thermoproteota</taxon>
        <taxon>Thermoprotei</taxon>
        <taxon>Desulfurococcales</taxon>
        <taxon>Desulfurococcaceae</taxon>
        <taxon>Ignicoccus</taxon>
    </lineage>
</organism>
<comment type="function">
    <text evidence="2">Catalyzes the ATP- and formate-dependent formylation of 5-aminoimidazole-4-carboxamide-1-beta-d-ribofuranosyl 5'-monophosphate (AICAR) to 5-formaminoimidazole-4-carboxamide-1-beta-d-ribofuranosyl 5'-monophosphate (FAICAR) in the absence of folates.</text>
</comment>
<comment type="catalytic activity">
    <reaction evidence="2">
        <text>5-amino-1-(5-phospho-beta-D-ribosyl)imidazole-4-carboxamide + formate + ATP = 5-formamido-1-(5-phospho-D-ribosyl)imidazole-4-carboxamide + ADP + phosphate</text>
        <dbReference type="Rhea" id="RHEA:24836"/>
        <dbReference type="ChEBI" id="CHEBI:15740"/>
        <dbReference type="ChEBI" id="CHEBI:30616"/>
        <dbReference type="ChEBI" id="CHEBI:43474"/>
        <dbReference type="ChEBI" id="CHEBI:58467"/>
        <dbReference type="ChEBI" id="CHEBI:58475"/>
        <dbReference type="ChEBI" id="CHEBI:456216"/>
        <dbReference type="EC" id="6.3.4.23"/>
    </reaction>
</comment>
<comment type="cofactor">
    <cofactor evidence="1">
        <name>Mg(2+)</name>
        <dbReference type="ChEBI" id="CHEBI:18420"/>
    </cofactor>
    <cofactor evidence="1">
        <name>Mn(2+)</name>
        <dbReference type="ChEBI" id="CHEBI:29035"/>
    </cofactor>
    <text evidence="1">Binds 1 Mg(2+) or Mn(2+) ion per subunit.</text>
</comment>
<comment type="pathway">
    <text evidence="2">Purine metabolism; IMP biosynthesis via de novo pathway; 5-formamido-1-(5-phospho-D-ribosyl)imidazole-4-carboxamide from 5-amino-1-(5-phospho-D-ribosyl)imidazole-4-carboxamide (formate route): step 1/1.</text>
</comment>
<comment type="similarity">
    <text evidence="2">Belongs to the phosphohexose mutase family.</text>
</comment>
<reference key="1">
    <citation type="journal article" date="2008" name="Genome Biol.">
        <title>A genomic analysis of the archaeal system Ignicoccus hospitalis-Nanoarchaeum equitans.</title>
        <authorList>
            <person name="Podar M."/>
            <person name="Anderson I."/>
            <person name="Makarova K.S."/>
            <person name="Elkins J.G."/>
            <person name="Ivanova N."/>
            <person name="Wall M.A."/>
            <person name="Lykidis A."/>
            <person name="Mavromatis K."/>
            <person name="Sun H."/>
            <person name="Hudson M.E."/>
            <person name="Chen W."/>
            <person name="Deciu C."/>
            <person name="Hutchison D."/>
            <person name="Eads J.R."/>
            <person name="Anderson A."/>
            <person name="Fernandes F."/>
            <person name="Szeto E."/>
            <person name="Lapidus A."/>
            <person name="Kyrpides N.C."/>
            <person name="Saier M.H. Jr."/>
            <person name="Richardson P.M."/>
            <person name="Rachel R."/>
            <person name="Huber H."/>
            <person name="Eisen J.A."/>
            <person name="Koonin E.V."/>
            <person name="Keller M."/>
            <person name="Stetter K.O."/>
        </authorList>
    </citation>
    <scope>NUCLEOTIDE SEQUENCE [LARGE SCALE GENOMIC DNA]</scope>
    <source>
        <strain>KIN4/I / DSM 18386 / JCM 14125</strain>
    </source>
</reference>
<feature type="chain" id="PRO_0000348615" description="5-formaminoimidazole-4-carboxamide-1-(beta)-D-ribofuranosyl 5'-monophosphate synthetase">
    <location>
        <begin position="1"/>
        <end position="347"/>
    </location>
</feature>
<feature type="domain" description="ATP-grasp" evidence="2">
    <location>
        <begin position="112"/>
        <end position="323"/>
    </location>
</feature>
<feature type="binding site" evidence="2">
    <location>
        <position position="23"/>
    </location>
    <ligand>
        <name>5-amino-1-(5-phospho-beta-D-ribosyl)imidazole-4-carboxamide</name>
        <dbReference type="ChEBI" id="CHEBI:58475"/>
    </ligand>
</feature>
<feature type="binding site" evidence="2">
    <location>
        <position position="91"/>
    </location>
    <ligand>
        <name>5-amino-1-(5-phospho-beta-D-ribosyl)imidazole-4-carboxamide</name>
        <dbReference type="ChEBI" id="CHEBI:58475"/>
    </ligand>
</feature>
<feature type="binding site" evidence="2">
    <location>
        <begin position="142"/>
        <end position="196"/>
    </location>
    <ligand>
        <name>ATP</name>
        <dbReference type="ChEBI" id="CHEBI:30616"/>
    </ligand>
</feature>
<feature type="binding site" evidence="2">
    <location>
        <position position="218"/>
    </location>
    <ligand>
        <name>ATP</name>
        <dbReference type="ChEBI" id="CHEBI:30616"/>
    </ligand>
</feature>
<feature type="binding site" evidence="2">
    <location>
        <position position="244"/>
    </location>
    <ligand>
        <name>5-amino-1-(5-phospho-beta-D-ribosyl)imidazole-4-carboxamide</name>
        <dbReference type="ChEBI" id="CHEBI:58475"/>
    </ligand>
</feature>
<feature type="binding site" evidence="2">
    <location>
        <position position="283"/>
    </location>
    <ligand>
        <name>Mg(2+)</name>
        <dbReference type="ChEBI" id="CHEBI:18420"/>
    </ligand>
</feature>
<feature type="binding site" evidence="2">
    <location>
        <position position="296"/>
    </location>
    <ligand>
        <name>Mg(2+)</name>
        <dbReference type="ChEBI" id="CHEBI:18420"/>
    </ligand>
</feature>
<dbReference type="EC" id="6.3.4.23" evidence="2"/>
<dbReference type="EMBL" id="CP000816">
    <property type="protein sequence ID" value="ABU81625.1"/>
    <property type="molecule type" value="Genomic_DNA"/>
</dbReference>
<dbReference type="RefSeq" id="WP_011998477.1">
    <property type="nucleotide sequence ID" value="NC_009776.1"/>
</dbReference>
<dbReference type="SMR" id="A8A9M3"/>
<dbReference type="STRING" id="453591.Igni_0442"/>
<dbReference type="GeneID" id="5561817"/>
<dbReference type="KEGG" id="iho:Igni_0442"/>
<dbReference type="eggNOG" id="arCOG04346">
    <property type="taxonomic scope" value="Archaea"/>
</dbReference>
<dbReference type="HOGENOM" id="CLU_065084_0_0_2"/>
<dbReference type="OrthoDB" id="14832at2157"/>
<dbReference type="PhylomeDB" id="A8A9M3"/>
<dbReference type="UniPathway" id="UPA00074">
    <property type="reaction ID" value="UER00134"/>
</dbReference>
<dbReference type="Proteomes" id="UP000000262">
    <property type="component" value="Chromosome"/>
</dbReference>
<dbReference type="GO" id="GO:0005524">
    <property type="term" value="F:ATP binding"/>
    <property type="evidence" value="ECO:0007669"/>
    <property type="project" value="UniProtKB-KW"/>
</dbReference>
<dbReference type="GO" id="GO:0016879">
    <property type="term" value="F:ligase activity, forming carbon-nitrogen bonds"/>
    <property type="evidence" value="ECO:0007669"/>
    <property type="project" value="UniProtKB-UniRule"/>
</dbReference>
<dbReference type="GO" id="GO:0000287">
    <property type="term" value="F:magnesium ion binding"/>
    <property type="evidence" value="ECO:0007669"/>
    <property type="project" value="InterPro"/>
</dbReference>
<dbReference type="GO" id="GO:0006189">
    <property type="term" value="P:'de novo' IMP biosynthetic process"/>
    <property type="evidence" value="ECO:0007669"/>
    <property type="project" value="UniProtKB-UniRule"/>
</dbReference>
<dbReference type="Gene3D" id="3.40.50.20">
    <property type="match status" value="1"/>
</dbReference>
<dbReference type="Gene3D" id="3.30.1490.20">
    <property type="entry name" value="ATP-grasp fold, A domain"/>
    <property type="match status" value="1"/>
</dbReference>
<dbReference type="Gene3D" id="3.30.470.20">
    <property type="entry name" value="ATP-grasp fold, B domain"/>
    <property type="match status" value="1"/>
</dbReference>
<dbReference type="HAMAP" id="MF_01163">
    <property type="entry name" value="IMP_biosynth_PurP"/>
    <property type="match status" value="1"/>
</dbReference>
<dbReference type="InterPro" id="IPR013815">
    <property type="entry name" value="ATP_grasp_subdomain_1"/>
</dbReference>
<dbReference type="InterPro" id="IPR023656">
    <property type="entry name" value="IMP_biosynth_PurP"/>
</dbReference>
<dbReference type="InterPro" id="IPR009720">
    <property type="entry name" value="IMP_biosynth_PurP_C"/>
</dbReference>
<dbReference type="InterPro" id="IPR010672">
    <property type="entry name" value="IMP_biosynth_PurP_N"/>
</dbReference>
<dbReference type="InterPro" id="IPR016185">
    <property type="entry name" value="PreATP-grasp_dom_sf"/>
</dbReference>
<dbReference type="PANTHER" id="PTHR38147:SF2">
    <property type="entry name" value="5-FORMAMINOIMIDAZOLE-4-CARBOXAMIDE-1-(BETA)-D-RIBOFURANOSYL 5'-MONOPHOSPHATE SYNTHETASE"/>
    <property type="match status" value="1"/>
</dbReference>
<dbReference type="PANTHER" id="PTHR38147">
    <property type="entry name" value="5-FORMAMINOIMIDAZOLE-4-CARBOXAMIDE-1-(BETA)-D-RIBOFURANOSYL 5'-MONOPHOSPHATE SYNTHETASE-RELATED"/>
    <property type="match status" value="1"/>
</dbReference>
<dbReference type="Pfam" id="PF06849">
    <property type="entry name" value="DUF1246"/>
    <property type="match status" value="1"/>
</dbReference>
<dbReference type="Pfam" id="PF06973">
    <property type="entry name" value="DUF1297"/>
    <property type="match status" value="1"/>
</dbReference>
<dbReference type="PIRSF" id="PIRSF004602">
    <property type="entry name" value="ATPgrasp_PurP"/>
    <property type="match status" value="1"/>
</dbReference>
<dbReference type="SUPFAM" id="SSF56059">
    <property type="entry name" value="Glutathione synthetase ATP-binding domain-like"/>
    <property type="match status" value="1"/>
</dbReference>
<dbReference type="SUPFAM" id="SSF52440">
    <property type="entry name" value="PreATP-grasp domain"/>
    <property type="match status" value="1"/>
</dbReference>
<gene>
    <name evidence="2" type="primary">purP</name>
    <name type="ordered locus">Igni_0442</name>
</gene>
<proteinExistence type="inferred from homology"/>